<dbReference type="EC" id="4.3.1.3" evidence="1"/>
<dbReference type="EMBL" id="CP000009">
    <property type="protein sequence ID" value="AAW60928.1"/>
    <property type="molecule type" value="Genomic_DNA"/>
</dbReference>
<dbReference type="RefSeq" id="WP_011252720.1">
    <property type="nucleotide sequence ID" value="NC_006677.1"/>
</dbReference>
<dbReference type="SMR" id="Q5FRR8"/>
<dbReference type="STRING" id="290633.GOX1167"/>
<dbReference type="KEGG" id="gox:GOX1167"/>
<dbReference type="eggNOG" id="COG2986">
    <property type="taxonomic scope" value="Bacteria"/>
</dbReference>
<dbReference type="HOGENOM" id="CLU_014801_4_0_5"/>
<dbReference type="UniPathway" id="UPA00379">
    <property type="reaction ID" value="UER00549"/>
</dbReference>
<dbReference type="Proteomes" id="UP000006375">
    <property type="component" value="Chromosome"/>
</dbReference>
<dbReference type="GO" id="GO:0005737">
    <property type="term" value="C:cytoplasm"/>
    <property type="evidence" value="ECO:0007669"/>
    <property type="project" value="UniProtKB-SubCell"/>
</dbReference>
<dbReference type="GO" id="GO:0004397">
    <property type="term" value="F:histidine ammonia-lyase activity"/>
    <property type="evidence" value="ECO:0007669"/>
    <property type="project" value="UniProtKB-UniRule"/>
</dbReference>
<dbReference type="GO" id="GO:0019556">
    <property type="term" value="P:L-histidine catabolic process to glutamate and formamide"/>
    <property type="evidence" value="ECO:0007669"/>
    <property type="project" value="UniProtKB-UniPathway"/>
</dbReference>
<dbReference type="GO" id="GO:0019557">
    <property type="term" value="P:L-histidine catabolic process to glutamate and formate"/>
    <property type="evidence" value="ECO:0007669"/>
    <property type="project" value="UniProtKB-UniPathway"/>
</dbReference>
<dbReference type="CDD" id="cd00332">
    <property type="entry name" value="PAL-HAL"/>
    <property type="match status" value="1"/>
</dbReference>
<dbReference type="FunFam" id="1.10.275.10:FF:000005">
    <property type="entry name" value="Histidine ammonia-lyase"/>
    <property type="match status" value="1"/>
</dbReference>
<dbReference type="FunFam" id="1.20.200.10:FF:000003">
    <property type="entry name" value="Histidine ammonia-lyase"/>
    <property type="match status" value="1"/>
</dbReference>
<dbReference type="Gene3D" id="1.20.200.10">
    <property type="entry name" value="Fumarase/aspartase (Central domain)"/>
    <property type="match status" value="1"/>
</dbReference>
<dbReference type="Gene3D" id="1.10.275.10">
    <property type="entry name" value="Fumarase/aspartase (N-terminal domain)"/>
    <property type="match status" value="1"/>
</dbReference>
<dbReference type="HAMAP" id="MF_00229">
    <property type="entry name" value="His_ammonia_lyase"/>
    <property type="match status" value="1"/>
</dbReference>
<dbReference type="InterPro" id="IPR001106">
    <property type="entry name" value="Aromatic_Lyase"/>
</dbReference>
<dbReference type="InterPro" id="IPR024083">
    <property type="entry name" value="Fumarase/histidase_N"/>
</dbReference>
<dbReference type="InterPro" id="IPR005921">
    <property type="entry name" value="HutH"/>
</dbReference>
<dbReference type="InterPro" id="IPR008948">
    <property type="entry name" value="L-Aspartase-like"/>
</dbReference>
<dbReference type="InterPro" id="IPR022313">
    <property type="entry name" value="Phe/His_NH3-lyase_AS"/>
</dbReference>
<dbReference type="NCBIfam" id="TIGR01225">
    <property type="entry name" value="hutH"/>
    <property type="match status" value="1"/>
</dbReference>
<dbReference type="NCBIfam" id="NF006871">
    <property type="entry name" value="PRK09367.1"/>
    <property type="match status" value="1"/>
</dbReference>
<dbReference type="PANTHER" id="PTHR10362">
    <property type="entry name" value="HISTIDINE AMMONIA-LYASE"/>
    <property type="match status" value="1"/>
</dbReference>
<dbReference type="Pfam" id="PF00221">
    <property type="entry name" value="Lyase_aromatic"/>
    <property type="match status" value="1"/>
</dbReference>
<dbReference type="SUPFAM" id="SSF48557">
    <property type="entry name" value="L-aspartase-like"/>
    <property type="match status" value="1"/>
</dbReference>
<dbReference type="PROSITE" id="PS00488">
    <property type="entry name" value="PAL_HISTIDASE"/>
    <property type="match status" value="1"/>
</dbReference>
<gene>
    <name evidence="1" type="primary">hutH</name>
    <name type="ordered locus">GOX1167</name>
</gene>
<name>HUTH_GLUOX</name>
<comment type="catalytic activity">
    <reaction evidence="1">
        <text>L-histidine = trans-urocanate + NH4(+)</text>
        <dbReference type="Rhea" id="RHEA:21232"/>
        <dbReference type="ChEBI" id="CHEBI:17771"/>
        <dbReference type="ChEBI" id="CHEBI:28938"/>
        <dbReference type="ChEBI" id="CHEBI:57595"/>
        <dbReference type="EC" id="4.3.1.3"/>
    </reaction>
</comment>
<comment type="pathway">
    <text evidence="1">Amino-acid degradation; L-histidine degradation into L-glutamate; N-formimidoyl-L-glutamate from L-histidine: step 1/3.</text>
</comment>
<comment type="subcellular location">
    <subcellularLocation>
        <location evidence="1">Cytoplasm</location>
    </subcellularLocation>
</comment>
<comment type="PTM">
    <text evidence="1">Contains an active site 4-methylidene-imidazol-5-one (MIO), which is formed autocatalytically by cyclization and dehydration of residues Ala-Ser-Gly.</text>
</comment>
<comment type="similarity">
    <text evidence="1">Belongs to the PAL/histidase family.</text>
</comment>
<reference key="1">
    <citation type="journal article" date="2005" name="Nat. Biotechnol.">
        <title>Complete genome sequence of the acetic acid bacterium Gluconobacter oxydans.</title>
        <authorList>
            <person name="Prust C."/>
            <person name="Hoffmeister M."/>
            <person name="Liesegang H."/>
            <person name="Wiezer A."/>
            <person name="Fricke W.F."/>
            <person name="Ehrenreich A."/>
            <person name="Gottschalk G."/>
            <person name="Deppenmeier U."/>
        </authorList>
    </citation>
    <scope>NUCLEOTIDE SEQUENCE [LARGE SCALE GENOMIC DNA]</scope>
    <source>
        <strain>621H</strain>
    </source>
</reference>
<keyword id="KW-0963">Cytoplasm</keyword>
<keyword id="KW-0369">Histidine metabolism</keyword>
<keyword id="KW-0456">Lyase</keyword>
<keyword id="KW-1185">Reference proteome</keyword>
<accession>Q5FRR8</accession>
<organism>
    <name type="scientific">Gluconobacter oxydans (strain 621H)</name>
    <name type="common">Gluconobacter suboxydans</name>
    <dbReference type="NCBI Taxonomy" id="290633"/>
    <lineage>
        <taxon>Bacteria</taxon>
        <taxon>Pseudomonadati</taxon>
        <taxon>Pseudomonadota</taxon>
        <taxon>Alphaproteobacteria</taxon>
        <taxon>Acetobacterales</taxon>
        <taxon>Acetobacteraceae</taxon>
        <taxon>Gluconobacter</taxon>
    </lineage>
</organism>
<evidence type="ECO:0000255" key="1">
    <source>
        <dbReference type="HAMAP-Rule" id="MF_00229"/>
    </source>
</evidence>
<feature type="chain" id="PRO_0000161008" description="Histidine ammonia-lyase">
    <location>
        <begin position="1"/>
        <end position="515"/>
    </location>
</feature>
<feature type="modified residue" description="2,3-didehydroalanine (Ser)" evidence="1">
    <location>
        <position position="146"/>
    </location>
</feature>
<feature type="cross-link" description="5-imidazolinone (Ala-Gly)" evidence="1">
    <location>
        <begin position="145"/>
        <end position="147"/>
    </location>
</feature>
<sequence length="515" mass="54544">MTTSIFTLTPGKITLSDLRDFYFGQMDVRLDDGTFEALQRAAESVERIVGRGEPVYGVNTGFGKLAKTRIPDDRLRDLQRNLVLSHAAGIGQPMPERVVRLILLLKANGLARGYSGVRPQIVQLLLDMLNQGVVPVIPEKGSVGASGDLAPLAHMSAVVIGEGEAFYQGKRLKGDEALKAAGLEPLVLGAKEGLALLNGTQASTALAIAALLDAERLFHAALITGGLTLDAARGTDAPFDPRLHELRGQKGQIECAAVYRALMQGSAIRASHLEDDERVQDPYCLRCQPQVMGACLDNLRQAARVLVIEANAVSDNPIHFPDTDEMISGGNFHAEPVAIAADLMAIAVSEVGAIAERRLALLVDAQMSGLPPFLVQDSGLNSGFMIAQVTAAALASENKTLAHPASVDSLPTSANQEDHVSMATFAARRVGDIVDNVRTIIAVEYLAAVQGLDFLAPLETSAPLLEVAKTLRKTVPFFAQDRLFTPDMEAARALIIDGALGSCVGSGVALPALEG</sequence>
<protein>
    <recommendedName>
        <fullName evidence="1">Histidine ammonia-lyase</fullName>
        <shortName evidence="1">Histidase</shortName>
        <ecNumber evidence="1">4.3.1.3</ecNumber>
    </recommendedName>
</protein>
<proteinExistence type="inferred from homology"/>